<accession>Q9FZG4</accession>
<accession>A4VCN1</accession>
<dbReference type="EC" id="2.7.1.1" evidence="1"/>
<dbReference type="EMBL" id="AC012463">
    <property type="protein sequence ID" value="AAF99786.1"/>
    <property type="status" value="ALT_SEQ"/>
    <property type="molecule type" value="Genomic_DNA"/>
</dbReference>
<dbReference type="EMBL" id="CP002684">
    <property type="protein sequence ID" value="AEE32221.1"/>
    <property type="molecule type" value="Genomic_DNA"/>
</dbReference>
<dbReference type="EMBL" id="BT030472">
    <property type="protein sequence ID" value="ABP88126.1"/>
    <property type="molecule type" value="mRNA"/>
</dbReference>
<dbReference type="RefSeq" id="NP_175220.2">
    <property type="nucleotide sequence ID" value="NM_103682.4"/>
</dbReference>
<dbReference type="SMR" id="Q9FZG4"/>
<dbReference type="FunCoup" id="Q9FZG4">
    <property type="interactions" value="1685"/>
</dbReference>
<dbReference type="STRING" id="3702.Q9FZG4"/>
<dbReference type="GlyGen" id="Q9FZG4">
    <property type="glycosylation" value="1 site"/>
</dbReference>
<dbReference type="iPTMnet" id="Q9FZG4"/>
<dbReference type="PaxDb" id="3702-AT1G47840.1"/>
<dbReference type="ProteomicsDB" id="232195"/>
<dbReference type="EnsemblPlants" id="AT1G47840.1">
    <property type="protein sequence ID" value="AT1G47840.1"/>
    <property type="gene ID" value="AT1G47840"/>
</dbReference>
<dbReference type="GeneID" id="841200"/>
<dbReference type="Gramene" id="AT1G47840.1">
    <property type="protein sequence ID" value="AT1G47840.1"/>
    <property type="gene ID" value="AT1G47840"/>
</dbReference>
<dbReference type="KEGG" id="ath:AT1G47840"/>
<dbReference type="Araport" id="AT1G47840"/>
<dbReference type="TAIR" id="AT1G47840">
    <property type="gene designation" value="HXK3"/>
</dbReference>
<dbReference type="eggNOG" id="KOG1369">
    <property type="taxonomic scope" value="Eukaryota"/>
</dbReference>
<dbReference type="HOGENOM" id="CLU_014393_5_1_1"/>
<dbReference type="InParanoid" id="Q9FZG4"/>
<dbReference type="OMA" id="YPNFEGY"/>
<dbReference type="PhylomeDB" id="Q9FZG4"/>
<dbReference type="BioCyc" id="ARA:AT1G47840-MONOMER"/>
<dbReference type="BRENDA" id="2.7.1.1">
    <property type="organism ID" value="399"/>
</dbReference>
<dbReference type="UniPathway" id="UPA00109">
    <property type="reaction ID" value="UER00180"/>
</dbReference>
<dbReference type="UniPathway" id="UPA00242"/>
<dbReference type="PRO" id="PR:Q9FZG4"/>
<dbReference type="Proteomes" id="UP000006548">
    <property type="component" value="Chromosome 1"/>
</dbReference>
<dbReference type="ExpressionAtlas" id="Q9FZG4">
    <property type="expression patterns" value="baseline and differential"/>
</dbReference>
<dbReference type="GO" id="GO:0009507">
    <property type="term" value="C:chloroplast"/>
    <property type="evidence" value="ECO:0000314"/>
    <property type="project" value="TAIR"/>
</dbReference>
<dbReference type="GO" id="GO:0005524">
    <property type="term" value="F:ATP binding"/>
    <property type="evidence" value="ECO:0007669"/>
    <property type="project" value="UniProtKB-KW"/>
</dbReference>
<dbReference type="GO" id="GO:0005536">
    <property type="term" value="F:D-glucose binding"/>
    <property type="evidence" value="ECO:0007669"/>
    <property type="project" value="InterPro"/>
</dbReference>
<dbReference type="GO" id="GO:0008865">
    <property type="term" value="F:fructokinase activity"/>
    <property type="evidence" value="ECO:0000314"/>
    <property type="project" value="TAIR"/>
</dbReference>
<dbReference type="GO" id="GO:0004340">
    <property type="term" value="F:glucokinase activity"/>
    <property type="evidence" value="ECO:0000314"/>
    <property type="project" value="TAIR"/>
</dbReference>
<dbReference type="GO" id="GO:0006096">
    <property type="term" value="P:glycolytic process"/>
    <property type="evidence" value="ECO:0007669"/>
    <property type="project" value="UniProtKB-UniPathway"/>
</dbReference>
<dbReference type="GO" id="GO:0019318">
    <property type="term" value="P:hexose metabolic process"/>
    <property type="evidence" value="ECO:0007669"/>
    <property type="project" value="UniProtKB-UniPathway"/>
</dbReference>
<dbReference type="GO" id="GO:0001678">
    <property type="term" value="P:intracellular glucose homeostasis"/>
    <property type="evidence" value="ECO:0007669"/>
    <property type="project" value="InterPro"/>
</dbReference>
<dbReference type="CDD" id="cd24020">
    <property type="entry name" value="ASKHA_NBD_HK_plant"/>
    <property type="match status" value="1"/>
</dbReference>
<dbReference type="FunFam" id="3.30.420.40:FF:000034">
    <property type="entry name" value="Phosphotransferase"/>
    <property type="match status" value="1"/>
</dbReference>
<dbReference type="Gene3D" id="3.30.420.40">
    <property type="match status" value="1"/>
</dbReference>
<dbReference type="Gene3D" id="3.40.367.20">
    <property type="match status" value="1"/>
</dbReference>
<dbReference type="InterPro" id="IPR043129">
    <property type="entry name" value="ATPase_NBD"/>
</dbReference>
<dbReference type="InterPro" id="IPR001312">
    <property type="entry name" value="Hexokinase"/>
</dbReference>
<dbReference type="InterPro" id="IPR019807">
    <property type="entry name" value="Hexokinase_BS"/>
</dbReference>
<dbReference type="InterPro" id="IPR022673">
    <property type="entry name" value="Hexokinase_C"/>
</dbReference>
<dbReference type="InterPro" id="IPR022672">
    <property type="entry name" value="Hexokinase_N"/>
</dbReference>
<dbReference type="PANTHER" id="PTHR19443">
    <property type="entry name" value="HEXOKINASE"/>
    <property type="match status" value="1"/>
</dbReference>
<dbReference type="PANTHER" id="PTHR19443:SF63">
    <property type="entry name" value="HEXOKINASE-LIKE 1 PROTEIN-RELATED"/>
    <property type="match status" value="1"/>
</dbReference>
<dbReference type="Pfam" id="PF00349">
    <property type="entry name" value="Hexokinase_1"/>
    <property type="match status" value="1"/>
</dbReference>
<dbReference type="Pfam" id="PF03727">
    <property type="entry name" value="Hexokinase_2"/>
    <property type="match status" value="1"/>
</dbReference>
<dbReference type="PRINTS" id="PR00475">
    <property type="entry name" value="HEXOKINASE"/>
</dbReference>
<dbReference type="SUPFAM" id="SSF53067">
    <property type="entry name" value="Actin-like ATPase domain"/>
    <property type="match status" value="2"/>
</dbReference>
<dbReference type="PROSITE" id="PS00378">
    <property type="entry name" value="HEXOKINASE_1"/>
    <property type="match status" value="1"/>
</dbReference>
<dbReference type="PROSITE" id="PS51748">
    <property type="entry name" value="HEXOKINASE_2"/>
    <property type="match status" value="1"/>
</dbReference>
<sequence>MSLMFSSPVVTPALGSFTFSSRPRSNYIVMSAVRSNSASTCPILTKFQKDCATPTPYLRNVANAIADDMRDGLAVEGGGDLEMILTFVDALPSGNEEGLFYALDLGGTNFRVRSVQLGGKKERVLATESEQISISQKLMIGTSEELFGFIASKLANFVAKEKPGRFLLEEGRKRELGFTFSFPVKQTSIDSGTLSKWTKGFKVSGMEGKNVVACLNEAMEAHGLDMRVSALVNDGVGTLAGARYWDEDVMVGVILGTGTNACYVEQKHAIPKLRSKSSSGTTIINTEWGGFSKILPQTIFDLEMDETSLNPGEHLYEKMISGMYLGEIVRRVLLHMCETSDLFGHFAPAKLSTPLALRTEHLCKMQEDNTDDLRDVGSILYDFLDVEANMNARRRVVEVCDTVVKRGGRLAGAGIVAILEKIEKDTKRMGSGKRTVVAMDGALYEKYPQYRQYMQDALVELLGHKLASHVAIKHTKDVSGLGAALLAATNSIY</sequence>
<proteinExistence type="evidence at transcript level"/>
<comment type="function">
    <text evidence="1">Fructose and glucose phosphorylating enzyme.</text>
</comment>
<comment type="catalytic activity">
    <reaction evidence="1">
        <text>a D-hexose + ATP = a D-hexose 6-phosphate + ADP + H(+)</text>
        <dbReference type="Rhea" id="RHEA:22740"/>
        <dbReference type="ChEBI" id="CHEBI:4194"/>
        <dbReference type="ChEBI" id="CHEBI:15378"/>
        <dbReference type="ChEBI" id="CHEBI:30616"/>
        <dbReference type="ChEBI" id="CHEBI:229467"/>
        <dbReference type="ChEBI" id="CHEBI:456216"/>
        <dbReference type="EC" id="2.7.1.1"/>
    </reaction>
</comment>
<comment type="catalytic activity">
    <reaction evidence="1">
        <text>D-fructose + ATP = D-fructose 6-phosphate + ADP + H(+)</text>
        <dbReference type="Rhea" id="RHEA:16125"/>
        <dbReference type="ChEBI" id="CHEBI:15378"/>
        <dbReference type="ChEBI" id="CHEBI:30616"/>
        <dbReference type="ChEBI" id="CHEBI:37721"/>
        <dbReference type="ChEBI" id="CHEBI:61527"/>
        <dbReference type="ChEBI" id="CHEBI:456216"/>
        <dbReference type="EC" id="2.7.1.1"/>
    </reaction>
</comment>
<comment type="catalytic activity">
    <reaction evidence="1">
        <text>D-glucose + ATP = D-glucose 6-phosphate + ADP + H(+)</text>
        <dbReference type="Rhea" id="RHEA:17825"/>
        <dbReference type="ChEBI" id="CHEBI:4167"/>
        <dbReference type="ChEBI" id="CHEBI:15378"/>
        <dbReference type="ChEBI" id="CHEBI:30616"/>
        <dbReference type="ChEBI" id="CHEBI:61548"/>
        <dbReference type="ChEBI" id="CHEBI:456216"/>
        <dbReference type="EC" id="2.7.1.1"/>
    </reaction>
</comment>
<comment type="pathway">
    <text evidence="1">Carbohydrate metabolism; hexose metabolism.</text>
</comment>
<comment type="pathway">
    <text evidence="1">Carbohydrate degradation; glycolysis; D-glyceraldehyde 3-phosphate and glycerone phosphate from D-glucose: step 1/4.</text>
</comment>
<comment type="similarity">
    <text evidence="3 4">Belongs to the hexokinase family.</text>
</comment>
<comment type="sequence caution" evidence="4">
    <conflict type="erroneous gene model prediction">
        <sequence resource="EMBL-CDS" id="AAF99786"/>
    </conflict>
</comment>
<keyword id="KW-0067">ATP-binding</keyword>
<keyword id="KW-0324">Glycolysis</keyword>
<keyword id="KW-0418">Kinase</keyword>
<keyword id="KW-0547">Nucleotide-binding</keyword>
<keyword id="KW-1185">Reference proteome</keyword>
<keyword id="KW-0808">Transferase</keyword>
<reference key="1">
    <citation type="journal article" date="2000" name="Nature">
        <title>Sequence and analysis of chromosome 1 of the plant Arabidopsis thaliana.</title>
        <authorList>
            <person name="Theologis A."/>
            <person name="Ecker J.R."/>
            <person name="Palm C.J."/>
            <person name="Federspiel N.A."/>
            <person name="Kaul S."/>
            <person name="White O."/>
            <person name="Alonso J."/>
            <person name="Altafi H."/>
            <person name="Araujo R."/>
            <person name="Bowman C.L."/>
            <person name="Brooks S.Y."/>
            <person name="Buehler E."/>
            <person name="Chan A."/>
            <person name="Chao Q."/>
            <person name="Chen H."/>
            <person name="Cheuk R.F."/>
            <person name="Chin C.W."/>
            <person name="Chung M.K."/>
            <person name="Conn L."/>
            <person name="Conway A.B."/>
            <person name="Conway A.R."/>
            <person name="Creasy T.H."/>
            <person name="Dewar K."/>
            <person name="Dunn P."/>
            <person name="Etgu P."/>
            <person name="Feldblyum T.V."/>
            <person name="Feng J.-D."/>
            <person name="Fong B."/>
            <person name="Fujii C.Y."/>
            <person name="Gill J.E."/>
            <person name="Goldsmith A.D."/>
            <person name="Haas B."/>
            <person name="Hansen N.F."/>
            <person name="Hughes B."/>
            <person name="Huizar L."/>
            <person name="Hunter J.L."/>
            <person name="Jenkins J."/>
            <person name="Johnson-Hopson C."/>
            <person name="Khan S."/>
            <person name="Khaykin E."/>
            <person name="Kim C.J."/>
            <person name="Koo H.L."/>
            <person name="Kremenetskaia I."/>
            <person name="Kurtz D.B."/>
            <person name="Kwan A."/>
            <person name="Lam B."/>
            <person name="Langin-Hooper S."/>
            <person name="Lee A."/>
            <person name="Lee J.M."/>
            <person name="Lenz C.A."/>
            <person name="Li J.H."/>
            <person name="Li Y.-P."/>
            <person name="Lin X."/>
            <person name="Liu S.X."/>
            <person name="Liu Z.A."/>
            <person name="Luros J.S."/>
            <person name="Maiti R."/>
            <person name="Marziali A."/>
            <person name="Militscher J."/>
            <person name="Miranda M."/>
            <person name="Nguyen M."/>
            <person name="Nierman W.C."/>
            <person name="Osborne B.I."/>
            <person name="Pai G."/>
            <person name="Peterson J."/>
            <person name="Pham P.K."/>
            <person name="Rizzo M."/>
            <person name="Rooney T."/>
            <person name="Rowley D."/>
            <person name="Sakano H."/>
            <person name="Salzberg S.L."/>
            <person name="Schwartz J.R."/>
            <person name="Shinn P."/>
            <person name="Southwick A.M."/>
            <person name="Sun H."/>
            <person name="Tallon L.J."/>
            <person name="Tambunga G."/>
            <person name="Toriumi M.J."/>
            <person name="Town C.D."/>
            <person name="Utterback T."/>
            <person name="Van Aken S."/>
            <person name="Vaysberg M."/>
            <person name="Vysotskaia V.S."/>
            <person name="Walker M."/>
            <person name="Wu D."/>
            <person name="Yu G."/>
            <person name="Fraser C.M."/>
            <person name="Venter J.C."/>
            <person name="Davis R.W."/>
        </authorList>
    </citation>
    <scope>NUCLEOTIDE SEQUENCE [LARGE SCALE GENOMIC DNA]</scope>
    <source>
        <strain>cv. Columbia</strain>
    </source>
</reference>
<reference key="2">
    <citation type="journal article" date="2017" name="Plant J.">
        <title>Araport11: a complete reannotation of the Arabidopsis thaliana reference genome.</title>
        <authorList>
            <person name="Cheng C.Y."/>
            <person name="Krishnakumar V."/>
            <person name="Chan A.P."/>
            <person name="Thibaud-Nissen F."/>
            <person name="Schobel S."/>
            <person name="Town C.D."/>
        </authorList>
    </citation>
    <scope>GENOME REANNOTATION</scope>
    <source>
        <strain>cv. Columbia</strain>
    </source>
</reference>
<reference key="3">
    <citation type="submission" date="2007-04" db="EMBL/GenBank/DDBJ databases">
        <title>Arabidopsis ORF clones.</title>
        <authorList>
            <person name="Bautista-Mercan V.R."/>
            <person name="Kim C.J."/>
            <person name="Chen H."/>
            <person name="Wu S.Y."/>
            <person name="De Los Reyes C."/>
            <person name="Ecker J.R."/>
        </authorList>
    </citation>
    <scope>NUCLEOTIDE SEQUENCE [LARGE SCALE MRNA]</scope>
    <source>
        <strain>cv. Columbia</strain>
    </source>
</reference>
<gene>
    <name type="ordered locus">At1g47840</name>
    <name type="ORF">T2E6.5</name>
</gene>
<protein>
    <recommendedName>
        <fullName>Hexokinase-like 1 protein</fullName>
        <ecNumber evidence="1">2.7.1.1</ecNumber>
    </recommendedName>
</protein>
<feature type="chain" id="PRO_0000259633" description="Hexokinase-like 1 protein">
    <location>
        <begin position="1"/>
        <end position="493"/>
    </location>
</feature>
<feature type="domain" description="Hexokinase" evidence="3">
    <location>
        <begin position="38"/>
        <end position="488"/>
    </location>
</feature>
<feature type="region of interest" description="Hexokinase small subdomain" evidence="3">
    <location>
        <begin position="93"/>
        <end position="232"/>
    </location>
</feature>
<feature type="region of interest" description="Hexokinase large subdomain" evidence="3">
    <location>
        <begin position="233"/>
        <end position="477"/>
    </location>
</feature>
<feature type="binding site" evidence="2">
    <location>
        <position position="107"/>
    </location>
    <ligand>
        <name>ADP</name>
        <dbReference type="ChEBI" id="CHEBI:456216"/>
    </ligand>
</feature>
<feature type="binding site" evidence="2">
    <location>
        <position position="108"/>
    </location>
    <ligand>
        <name>ADP</name>
        <dbReference type="ChEBI" id="CHEBI:456216"/>
    </ligand>
</feature>
<feature type="binding site" evidence="2">
    <location>
        <position position="109"/>
    </location>
    <ligand>
        <name>ADP</name>
        <dbReference type="ChEBI" id="CHEBI:456216"/>
    </ligand>
</feature>
<feature type="binding site" evidence="2">
    <location>
        <position position="198"/>
    </location>
    <ligand>
        <name>D-glucose</name>
        <dbReference type="ChEBI" id="CHEBI:4167"/>
    </ligand>
</feature>
<feature type="binding site" evidence="2">
    <location>
        <position position="199"/>
    </location>
    <ligand>
        <name>D-glucose</name>
        <dbReference type="ChEBI" id="CHEBI:4167"/>
    </ligand>
</feature>
<feature type="binding site" evidence="2">
    <location>
        <position position="233"/>
    </location>
    <ligand>
        <name>D-glucose</name>
        <dbReference type="ChEBI" id="CHEBI:4167"/>
    </ligand>
</feature>
<feature type="binding site" evidence="2">
    <location>
        <position position="234"/>
    </location>
    <ligand>
        <name>D-glucose</name>
        <dbReference type="ChEBI" id="CHEBI:4167"/>
    </ligand>
</feature>
<feature type="binding site" evidence="2">
    <location>
        <position position="257"/>
    </location>
    <ligand>
        <name>ADP</name>
        <dbReference type="ChEBI" id="CHEBI:456216"/>
    </ligand>
</feature>
<feature type="binding site" evidence="2">
    <location>
        <position position="260"/>
    </location>
    <ligand>
        <name>D-glucose</name>
        <dbReference type="ChEBI" id="CHEBI:4167"/>
    </ligand>
</feature>
<feature type="binding site" evidence="2">
    <location>
        <position position="287"/>
    </location>
    <ligand>
        <name>D-glucose</name>
        <dbReference type="ChEBI" id="CHEBI:4167"/>
    </ligand>
</feature>
<feature type="binding site" evidence="2">
    <location>
        <position position="317"/>
    </location>
    <ligand>
        <name>D-glucose</name>
        <dbReference type="ChEBI" id="CHEBI:4167"/>
    </ligand>
</feature>
<feature type="binding site" evidence="2">
    <location>
        <position position="442"/>
    </location>
    <ligand>
        <name>ADP</name>
        <dbReference type="ChEBI" id="CHEBI:456216"/>
    </ligand>
</feature>
<evidence type="ECO:0000250" key="1">
    <source>
        <dbReference type="UniProtKB" id="P93834"/>
    </source>
</evidence>
<evidence type="ECO:0000250" key="2">
    <source>
        <dbReference type="UniProtKB" id="Q8LQ68"/>
    </source>
</evidence>
<evidence type="ECO:0000255" key="3">
    <source>
        <dbReference type="PROSITE-ProRule" id="PRU01084"/>
    </source>
</evidence>
<evidence type="ECO:0000305" key="4"/>
<organism>
    <name type="scientific">Arabidopsis thaliana</name>
    <name type="common">Mouse-ear cress</name>
    <dbReference type="NCBI Taxonomy" id="3702"/>
    <lineage>
        <taxon>Eukaryota</taxon>
        <taxon>Viridiplantae</taxon>
        <taxon>Streptophyta</taxon>
        <taxon>Embryophyta</taxon>
        <taxon>Tracheophyta</taxon>
        <taxon>Spermatophyta</taxon>
        <taxon>Magnoliopsida</taxon>
        <taxon>eudicotyledons</taxon>
        <taxon>Gunneridae</taxon>
        <taxon>Pentapetalae</taxon>
        <taxon>rosids</taxon>
        <taxon>malvids</taxon>
        <taxon>Brassicales</taxon>
        <taxon>Brassicaceae</taxon>
        <taxon>Camelineae</taxon>
        <taxon>Arabidopsis</taxon>
    </lineage>
</organism>
<name>HXKL1_ARATH</name>